<organism>
    <name type="scientific">Shewanella sediminis (strain HAW-EB3)</name>
    <dbReference type="NCBI Taxonomy" id="425104"/>
    <lineage>
        <taxon>Bacteria</taxon>
        <taxon>Pseudomonadati</taxon>
        <taxon>Pseudomonadota</taxon>
        <taxon>Gammaproteobacteria</taxon>
        <taxon>Alteromonadales</taxon>
        <taxon>Shewanellaceae</taxon>
        <taxon>Shewanella</taxon>
    </lineage>
</organism>
<reference key="1">
    <citation type="submission" date="2007-08" db="EMBL/GenBank/DDBJ databases">
        <title>Complete sequence of Shewanella sediminis HAW-EB3.</title>
        <authorList>
            <consortium name="US DOE Joint Genome Institute"/>
            <person name="Copeland A."/>
            <person name="Lucas S."/>
            <person name="Lapidus A."/>
            <person name="Barry K."/>
            <person name="Glavina del Rio T."/>
            <person name="Dalin E."/>
            <person name="Tice H."/>
            <person name="Pitluck S."/>
            <person name="Chertkov O."/>
            <person name="Brettin T."/>
            <person name="Bruce D."/>
            <person name="Detter J.C."/>
            <person name="Han C."/>
            <person name="Schmutz J."/>
            <person name="Larimer F."/>
            <person name="Land M."/>
            <person name="Hauser L."/>
            <person name="Kyrpides N."/>
            <person name="Kim E."/>
            <person name="Zhao J.-S."/>
            <person name="Richardson P."/>
        </authorList>
    </citation>
    <scope>NUCLEOTIDE SEQUENCE [LARGE SCALE GENOMIC DNA]</scope>
    <source>
        <strain>HAW-EB3</strain>
    </source>
</reference>
<comment type="function">
    <text evidence="1">Catalyzes a reversible aldol reaction between acetaldehyde and D-glyceraldehyde 3-phosphate to generate 2-deoxy-D-ribose 5-phosphate.</text>
</comment>
<comment type="catalytic activity">
    <reaction evidence="1">
        <text>2-deoxy-D-ribose 5-phosphate = D-glyceraldehyde 3-phosphate + acetaldehyde</text>
        <dbReference type="Rhea" id="RHEA:12821"/>
        <dbReference type="ChEBI" id="CHEBI:15343"/>
        <dbReference type="ChEBI" id="CHEBI:59776"/>
        <dbReference type="ChEBI" id="CHEBI:62877"/>
        <dbReference type="EC" id="4.1.2.4"/>
    </reaction>
</comment>
<comment type="pathway">
    <text evidence="1">Carbohydrate degradation; 2-deoxy-D-ribose 1-phosphate degradation; D-glyceraldehyde 3-phosphate and acetaldehyde from 2-deoxy-alpha-D-ribose 1-phosphate: step 2/2.</text>
</comment>
<comment type="subcellular location">
    <subcellularLocation>
        <location evidence="1">Cytoplasm</location>
    </subcellularLocation>
</comment>
<comment type="similarity">
    <text evidence="1">Belongs to the DeoC/FbaB aldolase family. DeoC type 2 subfamily.</text>
</comment>
<accession>A8FYQ9</accession>
<name>DEOC_SHESH</name>
<sequence>MSDLKKAAQKAIELMDLTTLNDDDTDQKVIELCHKAKTPAGNTAAICIYPRFIPIARKTLNEMGCESIRIATVTNFPHGNDDIAIAVLETRAAVAYGADEVDVVFPYRALMAGNETVGFELVKACKEACGEGVLLKVIIESGVLQDPALIRKASELCIDAGADFIKTSTGKVPVNATIEAAEIMMTVISEKNTKVGFKPAGGVRDAAAAGEFLGLAARLLGDEWATPRTFRFGASSLLINLLHTLELGEAAKGPQGY</sequence>
<evidence type="ECO:0000255" key="1">
    <source>
        <dbReference type="HAMAP-Rule" id="MF_00592"/>
    </source>
</evidence>
<protein>
    <recommendedName>
        <fullName evidence="1">Deoxyribose-phosphate aldolase</fullName>
        <shortName evidence="1">DERA</shortName>
        <ecNumber evidence="1">4.1.2.4</ecNumber>
    </recommendedName>
    <alternativeName>
        <fullName evidence="1">2-deoxy-D-ribose 5-phosphate aldolase</fullName>
    </alternativeName>
    <alternativeName>
        <fullName evidence="1">Phosphodeoxyriboaldolase</fullName>
        <shortName evidence="1">Deoxyriboaldolase</shortName>
    </alternativeName>
</protein>
<proteinExistence type="inferred from homology"/>
<dbReference type="EC" id="4.1.2.4" evidence="1"/>
<dbReference type="EMBL" id="CP000821">
    <property type="protein sequence ID" value="ABV37982.1"/>
    <property type="molecule type" value="Genomic_DNA"/>
</dbReference>
<dbReference type="RefSeq" id="WP_012143712.1">
    <property type="nucleotide sequence ID" value="NC_009831.1"/>
</dbReference>
<dbReference type="SMR" id="A8FYQ9"/>
<dbReference type="STRING" id="425104.Ssed_3378"/>
<dbReference type="KEGG" id="sse:Ssed_3378"/>
<dbReference type="eggNOG" id="COG0274">
    <property type="taxonomic scope" value="Bacteria"/>
</dbReference>
<dbReference type="HOGENOM" id="CLU_053595_3_1_6"/>
<dbReference type="OrthoDB" id="6579831at2"/>
<dbReference type="UniPathway" id="UPA00002">
    <property type="reaction ID" value="UER00468"/>
</dbReference>
<dbReference type="Proteomes" id="UP000002015">
    <property type="component" value="Chromosome"/>
</dbReference>
<dbReference type="GO" id="GO:0005737">
    <property type="term" value="C:cytoplasm"/>
    <property type="evidence" value="ECO:0007669"/>
    <property type="project" value="UniProtKB-SubCell"/>
</dbReference>
<dbReference type="GO" id="GO:0004139">
    <property type="term" value="F:deoxyribose-phosphate aldolase activity"/>
    <property type="evidence" value="ECO:0007669"/>
    <property type="project" value="UniProtKB-UniRule"/>
</dbReference>
<dbReference type="GO" id="GO:0006018">
    <property type="term" value="P:2-deoxyribose 1-phosphate catabolic process"/>
    <property type="evidence" value="ECO:0007669"/>
    <property type="project" value="UniProtKB-UniRule"/>
</dbReference>
<dbReference type="GO" id="GO:0016052">
    <property type="term" value="P:carbohydrate catabolic process"/>
    <property type="evidence" value="ECO:0007669"/>
    <property type="project" value="TreeGrafter"/>
</dbReference>
<dbReference type="GO" id="GO:0009264">
    <property type="term" value="P:deoxyribonucleotide catabolic process"/>
    <property type="evidence" value="ECO:0007669"/>
    <property type="project" value="InterPro"/>
</dbReference>
<dbReference type="CDD" id="cd00959">
    <property type="entry name" value="DeoC"/>
    <property type="match status" value="1"/>
</dbReference>
<dbReference type="Gene3D" id="3.20.20.70">
    <property type="entry name" value="Aldolase class I"/>
    <property type="match status" value="1"/>
</dbReference>
<dbReference type="HAMAP" id="MF_00592">
    <property type="entry name" value="DeoC_type2"/>
    <property type="match status" value="1"/>
</dbReference>
<dbReference type="InterPro" id="IPR013785">
    <property type="entry name" value="Aldolase_TIM"/>
</dbReference>
<dbReference type="InterPro" id="IPR011343">
    <property type="entry name" value="DeoC"/>
</dbReference>
<dbReference type="InterPro" id="IPR002915">
    <property type="entry name" value="DeoC/FbaB/LacD_aldolase"/>
</dbReference>
<dbReference type="InterPro" id="IPR023649">
    <property type="entry name" value="DeoC_typeII"/>
</dbReference>
<dbReference type="NCBIfam" id="TIGR00126">
    <property type="entry name" value="deoC"/>
    <property type="match status" value="1"/>
</dbReference>
<dbReference type="PANTHER" id="PTHR10889">
    <property type="entry name" value="DEOXYRIBOSE-PHOSPHATE ALDOLASE"/>
    <property type="match status" value="1"/>
</dbReference>
<dbReference type="PANTHER" id="PTHR10889:SF3">
    <property type="entry name" value="DEOXYRIBOSE-PHOSPHATE ALDOLASE"/>
    <property type="match status" value="1"/>
</dbReference>
<dbReference type="Pfam" id="PF01791">
    <property type="entry name" value="DeoC"/>
    <property type="match status" value="1"/>
</dbReference>
<dbReference type="PIRSF" id="PIRSF001357">
    <property type="entry name" value="DeoC"/>
    <property type="match status" value="1"/>
</dbReference>
<dbReference type="SMART" id="SM01133">
    <property type="entry name" value="DeoC"/>
    <property type="match status" value="1"/>
</dbReference>
<dbReference type="SUPFAM" id="SSF51569">
    <property type="entry name" value="Aldolase"/>
    <property type="match status" value="1"/>
</dbReference>
<feature type="chain" id="PRO_1000082421" description="Deoxyribose-phosphate aldolase">
    <location>
        <begin position="1"/>
        <end position="257"/>
    </location>
</feature>
<feature type="active site" description="Proton donor/acceptor" evidence="1">
    <location>
        <position position="102"/>
    </location>
</feature>
<feature type="active site" description="Schiff-base intermediate with acetaldehyde" evidence="1">
    <location>
        <position position="166"/>
    </location>
</feature>
<feature type="active site" description="Proton donor/acceptor" evidence="1">
    <location>
        <position position="198"/>
    </location>
</feature>
<keyword id="KW-0963">Cytoplasm</keyword>
<keyword id="KW-0456">Lyase</keyword>
<keyword id="KW-1185">Reference proteome</keyword>
<keyword id="KW-0704">Schiff base</keyword>
<gene>
    <name evidence="1" type="primary">deoC</name>
    <name type="ordered locus">Ssed_3378</name>
</gene>